<protein>
    <recommendedName>
        <fullName>CASP-like protein Ni6</fullName>
    </recommendedName>
    <alternativeName>
        <fullName>CASP-like protein 1D1</fullName>
        <shortName>BvCASPL1D1</shortName>
    </alternativeName>
</protein>
<organism>
    <name type="scientific">Beta vulgaris subsp. maritima</name>
    <name type="common">Sea beet</name>
    <name type="synonym">Beta maritima</name>
    <dbReference type="NCBI Taxonomy" id="350892"/>
    <lineage>
        <taxon>Eukaryota</taxon>
        <taxon>Viridiplantae</taxon>
        <taxon>Streptophyta</taxon>
        <taxon>Embryophyta</taxon>
        <taxon>Tracheophyta</taxon>
        <taxon>Spermatophyta</taxon>
        <taxon>Magnoliopsida</taxon>
        <taxon>eudicotyledons</taxon>
        <taxon>Gunneridae</taxon>
        <taxon>Pentapetalae</taxon>
        <taxon>Caryophyllales</taxon>
        <taxon>Chenopodiaceae</taxon>
        <taxon>Betoideae</taxon>
        <taxon>Beta</taxon>
    </lineage>
</organism>
<feature type="chain" id="PRO_0000412016" description="CASP-like protein Ni6">
    <location>
        <begin position="1"/>
        <end position="194"/>
    </location>
</feature>
<feature type="topological domain" description="Cytoplasmic" evidence="2">
    <location>
        <begin position="1"/>
        <end position="27"/>
    </location>
</feature>
<feature type="transmembrane region" description="Helical" evidence="2">
    <location>
        <begin position="28"/>
        <end position="48"/>
    </location>
</feature>
<feature type="topological domain" description="Extracellular" evidence="2">
    <location>
        <begin position="49"/>
        <end position="75"/>
    </location>
</feature>
<feature type="transmembrane region" description="Helical" evidence="2">
    <location>
        <begin position="76"/>
        <end position="96"/>
    </location>
</feature>
<feature type="topological domain" description="Cytoplasmic" evidence="2">
    <location>
        <begin position="97"/>
        <end position="109"/>
    </location>
</feature>
<feature type="transmembrane region" description="Helical" evidence="2">
    <location>
        <begin position="110"/>
        <end position="130"/>
    </location>
</feature>
<feature type="topological domain" description="Extracellular" evidence="2">
    <location>
        <begin position="131"/>
        <end position="161"/>
    </location>
</feature>
<feature type="transmembrane region" description="Helical" evidence="2">
    <location>
        <begin position="162"/>
        <end position="182"/>
    </location>
</feature>
<feature type="topological domain" description="Cytoplasmic" evidence="2">
    <location>
        <begin position="183"/>
        <end position="194"/>
    </location>
</feature>
<evidence type="ECO:0000250" key="1"/>
<evidence type="ECO:0000255" key="2"/>
<evidence type="ECO:0000305" key="3"/>
<reference key="1">
    <citation type="submission" date="2009-12" db="EMBL/GenBank/DDBJ databases">
        <title>Beta vulgaris subsp. maritima leaf mRNA shows heavy metal tolerance.</title>
        <authorList>
            <person name="Karakaya H.C."/>
            <person name="Bozdag O.G."/>
        </authorList>
    </citation>
    <scope>NUCLEOTIDE SEQUENCE [MRNA]</scope>
</reference>
<reference key="2">
    <citation type="journal article" date="2014" name="Plant Physiol.">
        <title>Functional and evolutionary analysis of the CASPARIAN STRIP MEMBRANE DOMAIN PROTEIN family.</title>
        <authorList>
            <person name="Roppolo D."/>
            <person name="Boeckmann B."/>
            <person name="Pfister A."/>
            <person name="Boutet E."/>
            <person name="Rubio M.C."/>
            <person name="Denervaud-Tendon V."/>
            <person name="Vermeer J.E."/>
            <person name="Gheyselinck J."/>
            <person name="Xenarios I."/>
            <person name="Geldner N."/>
        </authorList>
    </citation>
    <scope>GENE FAMILY</scope>
    <scope>NOMENCLATURE</scope>
</reference>
<keyword id="KW-1003">Cell membrane</keyword>
<keyword id="KW-0472">Membrane</keyword>
<keyword id="KW-0812">Transmembrane</keyword>
<keyword id="KW-1133">Transmembrane helix</keyword>
<name>CSPL1_BETVM</name>
<dbReference type="EMBL" id="GU256246">
    <property type="protein sequence ID" value="ADA71986.1"/>
    <property type="molecule type" value="mRNA"/>
</dbReference>
<dbReference type="SMR" id="D2KQI6"/>
<dbReference type="GO" id="GO:0005886">
    <property type="term" value="C:plasma membrane"/>
    <property type="evidence" value="ECO:0007669"/>
    <property type="project" value="UniProtKB-SubCell"/>
</dbReference>
<dbReference type="InterPro" id="IPR006459">
    <property type="entry name" value="CASP/CASPL"/>
</dbReference>
<dbReference type="InterPro" id="IPR006702">
    <property type="entry name" value="CASP_dom"/>
</dbReference>
<dbReference type="InterPro" id="IPR044173">
    <property type="entry name" value="CASPL"/>
</dbReference>
<dbReference type="NCBIfam" id="TIGR01569">
    <property type="entry name" value="A_tha_TIGR01569"/>
    <property type="match status" value="1"/>
</dbReference>
<dbReference type="PANTHER" id="PTHR36488">
    <property type="entry name" value="CASP-LIKE PROTEIN 1U1"/>
    <property type="match status" value="1"/>
</dbReference>
<dbReference type="PANTHER" id="PTHR36488:SF8">
    <property type="entry name" value="CASP-LIKE PROTEIN 1U1"/>
    <property type="match status" value="1"/>
</dbReference>
<dbReference type="Pfam" id="PF04535">
    <property type="entry name" value="CASP_dom"/>
    <property type="match status" value="1"/>
</dbReference>
<sequence length="194" mass="20892">MSSMETEKGAVPTPQAPPVAPTDNKYRVVDVILRVLLLAASIASVVLMVTSKQTEIIVSPFGSRPNAAKFQNSPAFIYLVAALSVAGLYSIITALVSLSYMRKPIVPPKLFWILLIHDVLLLGIVAAATGTAGGVGYIGLKGNTHVRWGKIRNVYDKFCRHVGASIIVSLFAAAVLVLLVFVNANSLYRRIPKY</sequence>
<comment type="subunit">
    <text evidence="1">Homodimer and heterodimers.</text>
</comment>
<comment type="subcellular location">
    <subcellularLocation>
        <location evidence="1">Cell membrane</location>
        <topology evidence="1">Multi-pass membrane protein</topology>
    </subcellularLocation>
</comment>
<comment type="similarity">
    <text evidence="3">Belongs to the Casparian strip membrane proteins (CASP) family.</text>
</comment>
<gene>
    <name type="primary">Ni6</name>
</gene>
<proteinExistence type="evidence at transcript level"/>
<accession>D2KQI6</accession>